<keyword id="KW-0169">Cobalamin biosynthesis</keyword>
<keyword id="KW-0456">Lyase</keyword>
<keyword id="KW-0489">Methyltransferase</keyword>
<keyword id="KW-0511">Multifunctional enzyme</keyword>
<keyword id="KW-0520">NAD</keyword>
<keyword id="KW-0560">Oxidoreductase</keyword>
<keyword id="KW-0597">Phosphoprotein</keyword>
<keyword id="KW-0627">Porphyrin biosynthesis</keyword>
<keyword id="KW-1185">Reference proteome</keyword>
<keyword id="KW-0949">S-adenosyl-L-methionine</keyword>
<keyword id="KW-0808">Transferase</keyword>
<feature type="chain" id="PRO_1000186959" description="Siroheme synthase">
    <location>
        <begin position="1"/>
        <end position="457"/>
    </location>
</feature>
<feature type="region of interest" description="Precorrin-2 dehydrogenase /sirohydrochlorin ferrochelatase" evidence="1">
    <location>
        <begin position="1"/>
        <end position="204"/>
    </location>
</feature>
<feature type="region of interest" description="Uroporphyrinogen-III C-methyltransferase" evidence="1">
    <location>
        <begin position="216"/>
        <end position="457"/>
    </location>
</feature>
<feature type="active site" description="Proton acceptor" evidence="1">
    <location>
        <position position="248"/>
    </location>
</feature>
<feature type="active site" description="Proton donor" evidence="1">
    <location>
        <position position="270"/>
    </location>
</feature>
<feature type="binding site" evidence="1">
    <location>
        <begin position="22"/>
        <end position="23"/>
    </location>
    <ligand>
        <name>NAD(+)</name>
        <dbReference type="ChEBI" id="CHEBI:57540"/>
    </ligand>
</feature>
<feature type="binding site" evidence="1">
    <location>
        <begin position="43"/>
        <end position="44"/>
    </location>
    <ligand>
        <name>NAD(+)</name>
        <dbReference type="ChEBI" id="CHEBI:57540"/>
    </ligand>
</feature>
<feature type="binding site" evidence="1">
    <location>
        <position position="225"/>
    </location>
    <ligand>
        <name>S-adenosyl-L-methionine</name>
        <dbReference type="ChEBI" id="CHEBI:59789"/>
    </ligand>
</feature>
<feature type="binding site" evidence="1">
    <location>
        <begin position="301"/>
        <end position="303"/>
    </location>
    <ligand>
        <name>S-adenosyl-L-methionine</name>
        <dbReference type="ChEBI" id="CHEBI:59789"/>
    </ligand>
</feature>
<feature type="binding site" evidence="1">
    <location>
        <position position="306"/>
    </location>
    <ligand>
        <name>S-adenosyl-L-methionine</name>
        <dbReference type="ChEBI" id="CHEBI:59789"/>
    </ligand>
</feature>
<feature type="binding site" evidence="1">
    <location>
        <begin position="331"/>
        <end position="332"/>
    </location>
    <ligand>
        <name>S-adenosyl-L-methionine</name>
        <dbReference type="ChEBI" id="CHEBI:59789"/>
    </ligand>
</feature>
<feature type="binding site" evidence="1">
    <location>
        <position position="382"/>
    </location>
    <ligand>
        <name>S-adenosyl-L-methionine</name>
        <dbReference type="ChEBI" id="CHEBI:59789"/>
    </ligand>
</feature>
<feature type="binding site" evidence="1">
    <location>
        <position position="411"/>
    </location>
    <ligand>
        <name>S-adenosyl-L-methionine</name>
        <dbReference type="ChEBI" id="CHEBI:59789"/>
    </ligand>
</feature>
<feature type="modified residue" description="Phosphoserine" evidence="1">
    <location>
        <position position="128"/>
    </location>
</feature>
<comment type="function">
    <text evidence="1">Multifunctional enzyme that catalyzes the SAM-dependent methylations of uroporphyrinogen III at position C-2 and C-7 to form precorrin-2 via precorrin-1. Then it catalyzes the NAD-dependent ring dehydrogenation of precorrin-2 to yield sirohydrochlorin. Finally, it catalyzes the ferrochelation of sirohydrochlorin to yield siroheme.</text>
</comment>
<comment type="catalytic activity">
    <reaction evidence="1">
        <text>uroporphyrinogen III + 2 S-adenosyl-L-methionine = precorrin-2 + 2 S-adenosyl-L-homocysteine + H(+)</text>
        <dbReference type="Rhea" id="RHEA:32459"/>
        <dbReference type="ChEBI" id="CHEBI:15378"/>
        <dbReference type="ChEBI" id="CHEBI:57308"/>
        <dbReference type="ChEBI" id="CHEBI:57856"/>
        <dbReference type="ChEBI" id="CHEBI:58827"/>
        <dbReference type="ChEBI" id="CHEBI:59789"/>
        <dbReference type="EC" id="2.1.1.107"/>
    </reaction>
</comment>
<comment type="catalytic activity">
    <reaction evidence="1">
        <text>precorrin-2 + NAD(+) = sirohydrochlorin + NADH + 2 H(+)</text>
        <dbReference type="Rhea" id="RHEA:15613"/>
        <dbReference type="ChEBI" id="CHEBI:15378"/>
        <dbReference type="ChEBI" id="CHEBI:57540"/>
        <dbReference type="ChEBI" id="CHEBI:57945"/>
        <dbReference type="ChEBI" id="CHEBI:58351"/>
        <dbReference type="ChEBI" id="CHEBI:58827"/>
        <dbReference type="EC" id="1.3.1.76"/>
    </reaction>
</comment>
<comment type="catalytic activity">
    <reaction evidence="1">
        <text>siroheme + 2 H(+) = sirohydrochlorin + Fe(2+)</text>
        <dbReference type="Rhea" id="RHEA:24360"/>
        <dbReference type="ChEBI" id="CHEBI:15378"/>
        <dbReference type="ChEBI" id="CHEBI:29033"/>
        <dbReference type="ChEBI" id="CHEBI:58351"/>
        <dbReference type="ChEBI" id="CHEBI:60052"/>
        <dbReference type="EC" id="4.99.1.4"/>
    </reaction>
</comment>
<comment type="pathway">
    <text evidence="1">Cofactor biosynthesis; adenosylcobalamin biosynthesis; precorrin-2 from uroporphyrinogen III: step 1/1.</text>
</comment>
<comment type="pathway">
    <text evidence="1">Cofactor biosynthesis; adenosylcobalamin biosynthesis; sirohydrochlorin from precorrin-2: step 1/1.</text>
</comment>
<comment type="pathway">
    <text evidence="1">Porphyrin-containing compound metabolism; siroheme biosynthesis; precorrin-2 from uroporphyrinogen III: step 1/1.</text>
</comment>
<comment type="pathway">
    <text evidence="1">Porphyrin-containing compound metabolism; siroheme biosynthesis; siroheme from sirohydrochlorin: step 1/1.</text>
</comment>
<comment type="pathway">
    <text evidence="1">Porphyrin-containing compound metabolism; siroheme biosynthesis; sirohydrochlorin from precorrin-2: step 1/1.</text>
</comment>
<comment type="similarity">
    <text evidence="1">In the N-terminal section; belongs to the precorrin-2 dehydrogenase / sirohydrochlorin ferrochelatase family.</text>
</comment>
<comment type="similarity">
    <text evidence="1">In the C-terminal section; belongs to the precorrin methyltransferase family.</text>
</comment>
<name>CYSG_SHIB3</name>
<organism>
    <name type="scientific">Shigella boydii serotype 18 (strain CDC 3083-94 / BS512)</name>
    <dbReference type="NCBI Taxonomy" id="344609"/>
    <lineage>
        <taxon>Bacteria</taxon>
        <taxon>Pseudomonadati</taxon>
        <taxon>Pseudomonadota</taxon>
        <taxon>Gammaproteobacteria</taxon>
        <taxon>Enterobacterales</taxon>
        <taxon>Enterobacteriaceae</taxon>
        <taxon>Shigella</taxon>
    </lineage>
</organism>
<accession>B2U3H4</accession>
<protein>
    <recommendedName>
        <fullName evidence="1">Siroheme synthase</fullName>
    </recommendedName>
    <domain>
        <recommendedName>
            <fullName evidence="1">Uroporphyrinogen-III C-methyltransferase</fullName>
            <shortName evidence="1">Urogen III methylase</shortName>
            <ecNumber evidence="1">2.1.1.107</ecNumber>
        </recommendedName>
        <alternativeName>
            <fullName evidence="1">SUMT</fullName>
        </alternativeName>
        <alternativeName>
            <fullName evidence="1">Uroporphyrinogen III methylase</fullName>
            <shortName evidence="1">UROM</shortName>
        </alternativeName>
    </domain>
    <domain>
        <recommendedName>
            <fullName evidence="1">Precorrin-2 dehydrogenase</fullName>
            <ecNumber evidence="1">1.3.1.76</ecNumber>
        </recommendedName>
    </domain>
    <domain>
        <recommendedName>
            <fullName evidence="1">Sirohydrochlorin ferrochelatase</fullName>
            <ecNumber evidence="1">4.99.1.4</ecNumber>
        </recommendedName>
    </domain>
</protein>
<sequence length="457" mass="50041">MDHLPIFCQLRDRDCLIVGGGDVAERKARLLLDAGARLTVNALAFIPQFTAWADAGMLTLVEGPFDESLLDTCWLAIAATDDDTLNQRVSEAAEARRIFCNVVDAPKAASFIMPSIIDRSPLMVAVSSGGTSPVLARLLREKLESLLPLHLGQVAKYAGQLRGRVKQQFTTMSERRRFWEKLFVNDRLAQSLANNDQKAITETTEQLINEPLDHRGEVVLVGAGPGDAGLLTLKGLQQIQQADVVVYDRLVSDDIMNLVRRDADRVFVGKRAGYHCVPQEEINQILLREAQKGKRVVRLKGGDPFIFGRGGEELETLCNAGIPFSVVPGITAASGCSAYSGIPLTHRDYAQSVRLITGHLKTGGELDWENLAAEKQTLVFYMGLNQAATIQQKLIEHGMPGEMPVAIVENGTAVTQRVIDGTLTQLGELAQQMNSPSLIIIGRVVGLRDKLNWFSNH</sequence>
<proteinExistence type="inferred from homology"/>
<evidence type="ECO:0000255" key="1">
    <source>
        <dbReference type="HAMAP-Rule" id="MF_01646"/>
    </source>
</evidence>
<dbReference type="EC" id="2.1.1.107" evidence="1"/>
<dbReference type="EC" id="1.3.1.76" evidence="1"/>
<dbReference type="EC" id="4.99.1.4" evidence="1"/>
<dbReference type="EMBL" id="CP001063">
    <property type="protein sequence ID" value="ACD08660.1"/>
    <property type="molecule type" value="Genomic_DNA"/>
</dbReference>
<dbReference type="RefSeq" id="WP_000349885.1">
    <property type="nucleotide sequence ID" value="NC_010658.1"/>
</dbReference>
<dbReference type="SMR" id="B2U3H4"/>
<dbReference type="STRING" id="344609.SbBS512_E3744"/>
<dbReference type="KEGG" id="sbc:SbBS512_E3744"/>
<dbReference type="HOGENOM" id="CLU_011276_2_0_6"/>
<dbReference type="UniPathway" id="UPA00148">
    <property type="reaction ID" value="UER00211"/>
</dbReference>
<dbReference type="UniPathway" id="UPA00148">
    <property type="reaction ID" value="UER00222"/>
</dbReference>
<dbReference type="UniPathway" id="UPA00262">
    <property type="reaction ID" value="UER00211"/>
</dbReference>
<dbReference type="UniPathway" id="UPA00262">
    <property type="reaction ID" value="UER00222"/>
</dbReference>
<dbReference type="UniPathway" id="UPA00262">
    <property type="reaction ID" value="UER00376"/>
</dbReference>
<dbReference type="Proteomes" id="UP000001030">
    <property type="component" value="Chromosome"/>
</dbReference>
<dbReference type="GO" id="GO:0051287">
    <property type="term" value="F:NAD binding"/>
    <property type="evidence" value="ECO:0007669"/>
    <property type="project" value="InterPro"/>
</dbReference>
<dbReference type="GO" id="GO:0043115">
    <property type="term" value="F:precorrin-2 dehydrogenase activity"/>
    <property type="evidence" value="ECO:0007669"/>
    <property type="project" value="UniProtKB-UniRule"/>
</dbReference>
<dbReference type="GO" id="GO:0051266">
    <property type="term" value="F:sirohydrochlorin ferrochelatase activity"/>
    <property type="evidence" value="ECO:0007669"/>
    <property type="project" value="UniProtKB-EC"/>
</dbReference>
<dbReference type="GO" id="GO:0004851">
    <property type="term" value="F:uroporphyrin-III C-methyltransferase activity"/>
    <property type="evidence" value="ECO:0007669"/>
    <property type="project" value="UniProtKB-UniRule"/>
</dbReference>
<dbReference type="GO" id="GO:0009236">
    <property type="term" value="P:cobalamin biosynthetic process"/>
    <property type="evidence" value="ECO:0007669"/>
    <property type="project" value="UniProtKB-UniRule"/>
</dbReference>
<dbReference type="GO" id="GO:0032259">
    <property type="term" value="P:methylation"/>
    <property type="evidence" value="ECO:0007669"/>
    <property type="project" value="UniProtKB-KW"/>
</dbReference>
<dbReference type="GO" id="GO:0019354">
    <property type="term" value="P:siroheme biosynthetic process"/>
    <property type="evidence" value="ECO:0007669"/>
    <property type="project" value="UniProtKB-UniRule"/>
</dbReference>
<dbReference type="CDD" id="cd11642">
    <property type="entry name" value="SUMT"/>
    <property type="match status" value="1"/>
</dbReference>
<dbReference type="FunFam" id="1.10.8.210:FF:000001">
    <property type="entry name" value="Siroheme synthase"/>
    <property type="match status" value="1"/>
</dbReference>
<dbReference type="FunFam" id="3.30.160.110:FF:000001">
    <property type="entry name" value="Siroheme synthase"/>
    <property type="match status" value="1"/>
</dbReference>
<dbReference type="FunFam" id="3.30.950.10:FF:000001">
    <property type="entry name" value="Siroheme synthase"/>
    <property type="match status" value="1"/>
</dbReference>
<dbReference type="FunFam" id="3.40.1010.10:FF:000001">
    <property type="entry name" value="Siroheme synthase"/>
    <property type="match status" value="1"/>
</dbReference>
<dbReference type="FunFam" id="3.40.50.720:FF:000092">
    <property type="entry name" value="Siroheme synthase"/>
    <property type="match status" value="1"/>
</dbReference>
<dbReference type="Gene3D" id="3.40.1010.10">
    <property type="entry name" value="Cobalt-precorrin-4 Transmethylase, Domain 1"/>
    <property type="match status" value="1"/>
</dbReference>
<dbReference type="Gene3D" id="3.30.950.10">
    <property type="entry name" value="Methyltransferase, Cobalt-precorrin-4 Transmethylase, Domain 2"/>
    <property type="match status" value="1"/>
</dbReference>
<dbReference type="Gene3D" id="3.40.50.720">
    <property type="entry name" value="NAD(P)-binding Rossmann-like Domain"/>
    <property type="match status" value="1"/>
</dbReference>
<dbReference type="Gene3D" id="1.10.8.210">
    <property type="entry name" value="Sirohaem synthase, dimerisation domain"/>
    <property type="match status" value="1"/>
</dbReference>
<dbReference type="Gene3D" id="3.30.160.110">
    <property type="entry name" value="Siroheme synthase, domain 2"/>
    <property type="match status" value="1"/>
</dbReference>
<dbReference type="HAMAP" id="MF_01646">
    <property type="entry name" value="Siroheme_synth"/>
    <property type="match status" value="1"/>
</dbReference>
<dbReference type="InterPro" id="IPR000878">
    <property type="entry name" value="4pyrrol_Mease"/>
</dbReference>
<dbReference type="InterPro" id="IPR035996">
    <property type="entry name" value="4pyrrol_Methylase_sf"/>
</dbReference>
<dbReference type="InterPro" id="IPR014777">
    <property type="entry name" value="4pyrrole_Mease_sub1"/>
</dbReference>
<dbReference type="InterPro" id="IPR014776">
    <property type="entry name" value="4pyrrole_Mease_sub2"/>
</dbReference>
<dbReference type="InterPro" id="IPR006366">
    <property type="entry name" value="CobA/CysG_C"/>
</dbReference>
<dbReference type="InterPro" id="IPR036291">
    <property type="entry name" value="NAD(P)-bd_dom_sf"/>
</dbReference>
<dbReference type="InterPro" id="IPR050161">
    <property type="entry name" value="Siro_Cobalamin_biosynth"/>
</dbReference>
<dbReference type="InterPro" id="IPR037115">
    <property type="entry name" value="Sirohaem_synt_dimer_dom_sf"/>
</dbReference>
<dbReference type="InterPro" id="IPR012409">
    <property type="entry name" value="Sirohaem_synth"/>
</dbReference>
<dbReference type="InterPro" id="IPR028281">
    <property type="entry name" value="Sirohaem_synthase_central"/>
</dbReference>
<dbReference type="InterPro" id="IPR019478">
    <property type="entry name" value="Sirohaem_synthase_dimer_dom"/>
</dbReference>
<dbReference type="InterPro" id="IPR006367">
    <property type="entry name" value="Sirohaem_synthase_N"/>
</dbReference>
<dbReference type="InterPro" id="IPR003043">
    <property type="entry name" value="Uropor_MeTrfase_CS"/>
</dbReference>
<dbReference type="NCBIfam" id="TIGR01469">
    <property type="entry name" value="cobA_cysG_Cterm"/>
    <property type="match status" value="1"/>
</dbReference>
<dbReference type="NCBIfam" id="TIGR01470">
    <property type="entry name" value="cysG_Nterm"/>
    <property type="match status" value="1"/>
</dbReference>
<dbReference type="NCBIfam" id="NF004790">
    <property type="entry name" value="PRK06136.1"/>
    <property type="match status" value="1"/>
</dbReference>
<dbReference type="NCBIfam" id="NF007922">
    <property type="entry name" value="PRK10637.1"/>
    <property type="match status" value="1"/>
</dbReference>
<dbReference type="PANTHER" id="PTHR45790:SF1">
    <property type="entry name" value="SIROHEME SYNTHASE"/>
    <property type="match status" value="1"/>
</dbReference>
<dbReference type="PANTHER" id="PTHR45790">
    <property type="entry name" value="SIROHEME SYNTHASE-RELATED"/>
    <property type="match status" value="1"/>
</dbReference>
<dbReference type="Pfam" id="PF10414">
    <property type="entry name" value="CysG_dimeriser"/>
    <property type="match status" value="1"/>
</dbReference>
<dbReference type="Pfam" id="PF13241">
    <property type="entry name" value="NAD_binding_7"/>
    <property type="match status" value="1"/>
</dbReference>
<dbReference type="Pfam" id="PF14824">
    <property type="entry name" value="Sirohm_synth_M"/>
    <property type="match status" value="1"/>
</dbReference>
<dbReference type="Pfam" id="PF00590">
    <property type="entry name" value="TP_methylase"/>
    <property type="match status" value="1"/>
</dbReference>
<dbReference type="PIRSF" id="PIRSF036426">
    <property type="entry name" value="Sirohaem_synth"/>
    <property type="match status" value="1"/>
</dbReference>
<dbReference type="SUPFAM" id="SSF51735">
    <property type="entry name" value="NAD(P)-binding Rossmann-fold domains"/>
    <property type="match status" value="1"/>
</dbReference>
<dbReference type="SUPFAM" id="SSF75615">
    <property type="entry name" value="Siroheme synthase middle domains-like"/>
    <property type="match status" value="1"/>
</dbReference>
<dbReference type="SUPFAM" id="SSF53790">
    <property type="entry name" value="Tetrapyrrole methylase"/>
    <property type="match status" value="1"/>
</dbReference>
<dbReference type="PROSITE" id="PS00839">
    <property type="entry name" value="SUMT_1"/>
    <property type="match status" value="1"/>
</dbReference>
<dbReference type="PROSITE" id="PS00840">
    <property type="entry name" value="SUMT_2"/>
    <property type="match status" value="1"/>
</dbReference>
<reference key="1">
    <citation type="submission" date="2008-05" db="EMBL/GenBank/DDBJ databases">
        <title>Complete sequence of Shigella boydii serotype 18 strain BS512.</title>
        <authorList>
            <person name="Rasko D.A."/>
            <person name="Rosovitz M."/>
            <person name="Maurelli A.T."/>
            <person name="Myers G."/>
            <person name="Seshadri R."/>
            <person name="Cer R."/>
            <person name="Jiang L."/>
            <person name="Ravel J."/>
            <person name="Sebastian Y."/>
        </authorList>
    </citation>
    <scope>NUCLEOTIDE SEQUENCE [LARGE SCALE GENOMIC DNA]</scope>
    <source>
        <strain>CDC 3083-94 / BS512</strain>
    </source>
</reference>
<gene>
    <name evidence="1" type="primary">cysG</name>
    <name type="ordered locus">SbBS512_E3744</name>
</gene>